<evidence type="ECO:0000250" key="1">
    <source>
        <dbReference type="UniProtKB" id="Q2FXS9"/>
    </source>
</evidence>
<evidence type="ECO:0000305" key="2"/>
<accession>P47475</accession>
<reference key="1">
    <citation type="journal article" date="1995" name="Science">
        <title>The minimal gene complement of Mycoplasma genitalium.</title>
        <authorList>
            <person name="Fraser C.M."/>
            <person name="Gocayne J.D."/>
            <person name="White O."/>
            <person name="Adams M.D."/>
            <person name="Clayton R.A."/>
            <person name="Fleischmann R.D."/>
            <person name="Bult C.J."/>
            <person name="Kerlavage A.R."/>
            <person name="Sutton G.G."/>
            <person name="Kelley J.M."/>
            <person name="Fritchman J.L."/>
            <person name="Weidman J.F."/>
            <person name="Small K.V."/>
            <person name="Sandusky M."/>
            <person name="Fuhrmann J.L."/>
            <person name="Nguyen D.T."/>
            <person name="Utterback T.R."/>
            <person name="Saudek D.M."/>
            <person name="Phillips C.A."/>
            <person name="Merrick J.M."/>
            <person name="Tomb J.-F."/>
            <person name="Dougherty B.A."/>
            <person name="Bott K.F."/>
            <person name="Hu P.-C."/>
            <person name="Lucier T.S."/>
            <person name="Peterson S.N."/>
            <person name="Smith H.O."/>
            <person name="Hutchison C.A. III"/>
            <person name="Venter J.C."/>
        </authorList>
    </citation>
    <scope>NUCLEOTIDE SEQUENCE [LARGE SCALE GENOMIC DNA]</scope>
    <source>
        <strain>ATCC 33530 / DSM 19775 / NCTC 10195 / G37</strain>
    </source>
</reference>
<reference key="2">
    <citation type="journal article" date="1993" name="J. Bacteriol.">
        <title>A survey of the Mycoplasma genitalium genome by using random sequencing.</title>
        <authorList>
            <person name="Peterson S.N."/>
            <person name="Hu P.-C."/>
            <person name="Bott K.F."/>
            <person name="Hutchison C.A. III"/>
        </authorList>
    </citation>
    <scope>NUCLEOTIDE SEQUENCE [GENOMIC DNA]</scope>
    <source>
        <strain>ATCC 33530 / DSM 19775 / NCTC 10195 / G37</strain>
    </source>
</reference>
<proteinExistence type="inferred from homology"/>
<comment type="function">
    <text evidence="1">An essential cysteine protease that cleaves the N-terminus from ribosomal protein bL27.</text>
</comment>
<comment type="subunit">
    <text evidence="1">Homodimer.</text>
</comment>
<comment type="similarity">
    <text evidence="2">Belongs to the Prp family.</text>
</comment>
<feature type="chain" id="PRO_0000210471" description="Ribosomal processing cysteine protease Prp">
    <location>
        <begin position="1"/>
        <end position="99"/>
    </location>
</feature>
<feature type="active site" description="Proton donor" evidence="1">
    <location>
        <position position="16"/>
    </location>
</feature>
<feature type="active site" description="Nucleophile" evidence="1">
    <location>
        <position position="28"/>
    </location>
</feature>
<dbReference type="EC" id="3.4.22.-" evidence="1"/>
<dbReference type="EMBL" id="L43967">
    <property type="protein sequence ID" value="AAC71454.1"/>
    <property type="molecule type" value="Genomic_DNA"/>
</dbReference>
<dbReference type="EMBL" id="U02141">
    <property type="protein sequence ID" value="AAD12419.1"/>
    <property type="molecule type" value="Genomic_DNA"/>
</dbReference>
<dbReference type="PIR" id="G64225">
    <property type="entry name" value="G64225"/>
</dbReference>
<dbReference type="RefSeq" id="WP_009885770.1">
    <property type="nucleotide sequence ID" value="NC_000908.2"/>
</dbReference>
<dbReference type="SMR" id="P47475"/>
<dbReference type="STRING" id="243273.MG_233"/>
<dbReference type="GeneID" id="88282379"/>
<dbReference type="KEGG" id="mge:MG_233"/>
<dbReference type="eggNOG" id="COG2868">
    <property type="taxonomic scope" value="Bacteria"/>
</dbReference>
<dbReference type="HOGENOM" id="CLU_140910_1_0_14"/>
<dbReference type="InParanoid" id="P47475"/>
<dbReference type="OrthoDB" id="48998at2"/>
<dbReference type="BioCyc" id="MGEN243273:G1GJ2-280-MONOMER"/>
<dbReference type="Proteomes" id="UP000000807">
    <property type="component" value="Chromosome"/>
</dbReference>
<dbReference type="GO" id="GO:0008234">
    <property type="term" value="F:cysteine-type peptidase activity"/>
    <property type="evidence" value="ECO:0007669"/>
    <property type="project" value="UniProtKB-KW"/>
</dbReference>
<dbReference type="GO" id="GO:0006508">
    <property type="term" value="P:proteolysis"/>
    <property type="evidence" value="ECO:0007669"/>
    <property type="project" value="UniProtKB-KW"/>
</dbReference>
<dbReference type="GO" id="GO:0042254">
    <property type="term" value="P:ribosome biogenesis"/>
    <property type="evidence" value="ECO:0007669"/>
    <property type="project" value="UniProtKB-KW"/>
</dbReference>
<dbReference type="CDD" id="cd16332">
    <property type="entry name" value="Prp-like"/>
    <property type="match status" value="1"/>
</dbReference>
<dbReference type="Gene3D" id="3.30.70.1490">
    <property type="entry name" value="Cysteine protease Prp"/>
    <property type="match status" value="1"/>
</dbReference>
<dbReference type="InterPro" id="IPR007422">
    <property type="entry name" value="Peptidase_Prp"/>
</dbReference>
<dbReference type="InterPro" id="IPR036764">
    <property type="entry name" value="Peptidase_Prp_sf"/>
</dbReference>
<dbReference type="Pfam" id="PF04327">
    <property type="entry name" value="Peptidase_Prp"/>
    <property type="match status" value="1"/>
</dbReference>
<dbReference type="SUPFAM" id="SSF118010">
    <property type="entry name" value="TM1457-like"/>
    <property type="match status" value="1"/>
</dbReference>
<organism>
    <name type="scientific">Mycoplasma genitalium (strain ATCC 33530 / DSM 19775 / NCTC 10195 / G37)</name>
    <name type="common">Mycoplasmoides genitalium</name>
    <dbReference type="NCBI Taxonomy" id="243273"/>
    <lineage>
        <taxon>Bacteria</taxon>
        <taxon>Bacillati</taxon>
        <taxon>Mycoplasmatota</taxon>
        <taxon>Mycoplasmoidales</taxon>
        <taxon>Mycoplasmoidaceae</taxon>
        <taxon>Mycoplasmoides</taxon>
    </lineage>
</organism>
<sequence length="99" mass="10786">MIKINISQNFLVAKGHALFAEKGKDIVCAAISGIIFGGVAWFEPDKIEFTENKLVPSIALKLIDPTPNVAVAFSVITVQLKAIANSYPNHIVINEESYE</sequence>
<keyword id="KW-0378">Hydrolase</keyword>
<keyword id="KW-0645">Protease</keyword>
<keyword id="KW-1185">Reference proteome</keyword>
<keyword id="KW-0690">Ribosome biogenesis</keyword>
<keyword id="KW-0788">Thiol protease</keyword>
<name>PRP_MYCGE</name>
<gene>
    <name evidence="1" type="primary">prp</name>
    <name type="ordered locus">MG233</name>
</gene>
<protein>
    <recommendedName>
        <fullName evidence="1">Ribosomal processing cysteine protease Prp</fullName>
        <shortName evidence="1">Prp</shortName>
        <ecNumber evidence="1">3.4.22.-</ecNumber>
    </recommendedName>
</protein>